<dbReference type="EMBL" id="AM420293">
    <property type="protein sequence ID" value="CAL99605.1"/>
    <property type="status" value="ALT_INIT"/>
    <property type="molecule type" value="Genomic_DNA"/>
</dbReference>
<dbReference type="RefSeq" id="WP_009947000.1">
    <property type="nucleotide sequence ID" value="NC_009142.1"/>
</dbReference>
<dbReference type="SMR" id="A4F6D1"/>
<dbReference type="STRING" id="405948.SACE_0255"/>
<dbReference type="KEGG" id="sen:SACE_0255"/>
<dbReference type="eggNOG" id="COG0353">
    <property type="taxonomic scope" value="Bacteria"/>
</dbReference>
<dbReference type="HOGENOM" id="CLU_060739_1_0_11"/>
<dbReference type="OrthoDB" id="9802672at2"/>
<dbReference type="Proteomes" id="UP000006728">
    <property type="component" value="Chromosome"/>
</dbReference>
<dbReference type="GO" id="GO:0003677">
    <property type="term" value="F:DNA binding"/>
    <property type="evidence" value="ECO:0007669"/>
    <property type="project" value="UniProtKB-UniRule"/>
</dbReference>
<dbReference type="GO" id="GO:0008270">
    <property type="term" value="F:zinc ion binding"/>
    <property type="evidence" value="ECO:0007669"/>
    <property type="project" value="UniProtKB-KW"/>
</dbReference>
<dbReference type="GO" id="GO:0006310">
    <property type="term" value="P:DNA recombination"/>
    <property type="evidence" value="ECO:0007669"/>
    <property type="project" value="UniProtKB-UniRule"/>
</dbReference>
<dbReference type="GO" id="GO:0006281">
    <property type="term" value="P:DNA repair"/>
    <property type="evidence" value="ECO:0007669"/>
    <property type="project" value="UniProtKB-UniRule"/>
</dbReference>
<dbReference type="CDD" id="cd01025">
    <property type="entry name" value="TOPRIM_recR"/>
    <property type="match status" value="1"/>
</dbReference>
<dbReference type="Gene3D" id="3.40.1360.10">
    <property type="match status" value="1"/>
</dbReference>
<dbReference type="Gene3D" id="6.10.250.240">
    <property type="match status" value="1"/>
</dbReference>
<dbReference type="Gene3D" id="1.10.8.420">
    <property type="entry name" value="RecR Domain 1"/>
    <property type="match status" value="1"/>
</dbReference>
<dbReference type="HAMAP" id="MF_00017">
    <property type="entry name" value="RecR"/>
    <property type="match status" value="1"/>
</dbReference>
<dbReference type="InterPro" id="IPR000093">
    <property type="entry name" value="DNA_Rcmb_RecR"/>
</dbReference>
<dbReference type="InterPro" id="IPR003583">
    <property type="entry name" value="Hlx-hairpin-Hlx_DNA-bd_motif"/>
</dbReference>
<dbReference type="InterPro" id="IPR023627">
    <property type="entry name" value="Rcmb_RecR"/>
</dbReference>
<dbReference type="InterPro" id="IPR015967">
    <property type="entry name" value="Rcmb_RecR_Znf"/>
</dbReference>
<dbReference type="InterPro" id="IPR006171">
    <property type="entry name" value="TOPRIM_dom"/>
</dbReference>
<dbReference type="InterPro" id="IPR034137">
    <property type="entry name" value="TOPRIM_RecR"/>
</dbReference>
<dbReference type="NCBIfam" id="TIGR00615">
    <property type="entry name" value="recR"/>
    <property type="match status" value="1"/>
</dbReference>
<dbReference type="PANTHER" id="PTHR30446">
    <property type="entry name" value="RECOMBINATION PROTEIN RECR"/>
    <property type="match status" value="1"/>
</dbReference>
<dbReference type="PANTHER" id="PTHR30446:SF0">
    <property type="entry name" value="RECOMBINATION PROTEIN RECR"/>
    <property type="match status" value="1"/>
</dbReference>
<dbReference type="Pfam" id="PF21175">
    <property type="entry name" value="RecR_C"/>
    <property type="match status" value="1"/>
</dbReference>
<dbReference type="Pfam" id="PF21176">
    <property type="entry name" value="RecR_HhH"/>
    <property type="match status" value="1"/>
</dbReference>
<dbReference type="Pfam" id="PF02132">
    <property type="entry name" value="RecR_ZnF"/>
    <property type="match status" value="1"/>
</dbReference>
<dbReference type="Pfam" id="PF13662">
    <property type="entry name" value="Toprim_4"/>
    <property type="match status" value="1"/>
</dbReference>
<dbReference type="SMART" id="SM00278">
    <property type="entry name" value="HhH1"/>
    <property type="match status" value="1"/>
</dbReference>
<dbReference type="SMART" id="SM00493">
    <property type="entry name" value="TOPRIM"/>
    <property type="match status" value="1"/>
</dbReference>
<dbReference type="SUPFAM" id="SSF111304">
    <property type="entry name" value="Recombination protein RecR"/>
    <property type="match status" value="1"/>
</dbReference>
<dbReference type="PROSITE" id="PS01300">
    <property type="entry name" value="RECR"/>
    <property type="match status" value="1"/>
</dbReference>
<dbReference type="PROSITE" id="PS50880">
    <property type="entry name" value="TOPRIM"/>
    <property type="match status" value="1"/>
</dbReference>
<accession>A4F6D1</accession>
<sequence length="198" mass="21676">MYEGPVQDLIDELGRLPGIGPKSAQRIAFHLLAAEPADVTRLQEVLQKVKEGVVFCDICGNVSEEPTCRICRDARRDPAVVCVVEEPKDVLAVERTREFRGRYHVLGGALDPLSGVGPDQLRVRELLTRIGRDEITEVIIATDPNTEGEATATYLVRMLRDFPGLNVTRLASGLPMGGDLEFADELTLGRALSGRRAV</sequence>
<protein>
    <recommendedName>
        <fullName evidence="1">Recombination protein RecR</fullName>
    </recommendedName>
</protein>
<name>RECR_SACEN</name>
<comment type="function">
    <text evidence="1">May play a role in DNA repair. It seems to be involved in an RecBC-independent recombinational process of DNA repair. It may act with RecF and RecO.</text>
</comment>
<comment type="similarity">
    <text evidence="1">Belongs to the RecR family.</text>
</comment>
<comment type="sequence caution" evidence="2">
    <conflict type="erroneous initiation">
        <sequence resource="EMBL-CDS" id="CAL99605"/>
    </conflict>
</comment>
<evidence type="ECO:0000255" key="1">
    <source>
        <dbReference type="HAMAP-Rule" id="MF_00017"/>
    </source>
</evidence>
<evidence type="ECO:0000305" key="2"/>
<keyword id="KW-0227">DNA damage</keyword>
<keyword id="KW-0233">DNA recombination</keyword>
<keyword id="KW-0234">DNA repair</keyword>
<keyword id="KW-0479">Metal-binding</keyword>
<keyword id="KW-1185">Reference proteome</keyword>
<keyword id="KW-0862">Zinc</keyword>
<keyword id="KW-0863">Zinc-finger</keyword>
<proteinExistence type="inferred from homology"/>
<gene>
    <name evidence="1" type="primary">recR</name>
    <name type="ordered locus">SACE_0255</name>
</gene>
<feature type="chain" id="PRO_0000322951" description="Recombination protein RecR">
    <location>
        <begin position="1"/>
        <end position="198"/>
    </location>
</feature>
<feature type="domain" description="Toprim" evidence="1">
    <location>
        <begin position="79"/>
        <end position="175"/>
    </location>
</feature>
<feature type="zinc finger region" description="C4-type" evidence="1">
    <location>
        <begin position="56"/>
        <end position="71"/>
    </location>
</feature>
<organism>
    <name type="scientific">Saccharopolyspora erythraea (strain ATCC 11635 / DSM 40517 / JCM 4748 / NBRC 13426 / NCIMB 8594 / NRRL 2338)</name>
    <dbReference type="NCBI Taxonomy" id="405948"/>
    <lineage>
        <taxon>Bacteria</taxon>
        <taxon>Bacillati</taxon>
        <taxon>Actinomycetota</taxon>
        <taxon>Actinomycetes</taxon>
        <taxon>Pseudonocardiales</taxon>
        <taxon>Pseudonocardiaceae</taxon>
        <taxon>Saccharopolyspora</taxon>
    </lineage>
</organism>
<reference key="1">
    <citation type="journal article" date="2007" name="Nat. Biotechnol.">
        <title>Complete genome sequence of the erythromycin-producing bacterium Saccharopolyspora erythraea NRRL23338.</title>
        <authorList>
            <person name="Oliynyk M."/>
            <person name="Samborskyy M."/>
            <person name="Lester J.B."/>
            <person name="Mironenko T."/>
            <person name="Scott N."/>
            <person name="Dickens S."/>
            <person name="Haydock S.F."/>
            <person name="Leadlay P.F."/>
        </authorList>
    </citation>
    <scope>NUCLEOTIDE SEQUENCE [LARGE SCALE GENOMIC DNA]</scope>
    <source>
        <strain>ATCC 11635 / DSM 40517 / JCM 4748 / NBRC 13426 / NCIMB 8594 / NRRL 2338</strain>
    </source>
</reference>